<name>LRIG3_MOUSE</name>
<sequence length="1117" mass="122688">MGAPGLRAATAALGLLLCAGLGRAGPAGSGGHGAPGQLLDDDAQRPCPAACHCLGDLLDCSRRRLVRLPDPLPAWVTRLDLSHNRLSFIQTSSLSHLQSLQEVKLNNNELETIPNLGSISANIRQLSLAGNAIDKILPEQLEAFQSLETLDLSNNNISELRTAFPPLQLKYLYINNNRVSSMEPGYFDNLASTLLVLKLNRNRISAIPPKMFKLPQLQHLELNRNKIKNVDGLTFQGLGALKSLKMQRNGVTKLMDGAFWGLSNMEVLQLDHNNLTEITKGWLYGLLMLRELHLSQNAINRISPDAWEFCQKLSELDLTFNHLSRLDDSSFLGLSLLNALHIGNNKVSYIADCAFRGLTSLKTLDLRNNEISWTIEDMSGAFSGLDRLRQLILQGNRIRSITKKAFAGLDTLEHLDLSGNAIMSLQSNAFSQMKKLQQLHLNTSSLLCDCQLRWLPQWVAENNFQSFVNASCAHPQLLKGRSIFTVSPDGFVCDDFPKPQITVQPETQSAIKGSDVSFTCSAASSSDSPMTFAWKKDNEALQDAEMENYAHLRAQGGELMEYTTILRLRNVEFTSEGKYQCVISNHFGSSYSVKAKLTINMLPSFTKTPMDLTIRAGAMARLECAAVGHPAPQIAWQKDGGTDFPAARERRMHVMPEDDVFFIVDVKIEDIGVYSCTAQNSAGSVSANATLTVLETPSFLRPLLDRTVTKGETAVLQCIAGGSPPPRLNWTKDDSPLVVTERHFFAAGNQLLIIVDSDVSDAGKYTCEMSNTLGTERGNVRLSVIPTPTCDSPHMTAPSLDGDGWATVGVVIIAVVCCVVGTSLVWVVIIYHTRRRNEDCSITNTDETNLPADIPSYLSSQGTLADRQDGYISSESGSHHQFVTSSGGGFFLPQHDGAGTCHFDDSSEADVEAASDPFLCPFVGSTGPVYLQGNLYSPDPFEVYLPGCSSDPRTALMDHCESSYVKQDRFSCARPSEEPCERSLKSIPWPHSRKLTDSTYPPNEGHTVQTLCLNKSSVDFSTGPEPGSATSSNSFMGTFGKPLRRPHLDAFSSSAQPPDCQPRPCHGKSLSSPELDSESEENDKERTDFREENHRCTYQQIFHTYRTPDCQPCDSDT</sequence>
<organism>
    <name type="scientific">Mus musculus</name>
    <name type="common">Mouse</name>
    <dbReference type="NCBI Taxonomy" id="10090"/>
    <lineage>
        <taxon>Eukaryota</taxon>
        <taxon>Metazoa</taxon>
        <taxon>Chordata</taxon>
        <taxon>Craniata</taxon>
        <taxon>Vertebrata</taxon>
        <taxon>Euteleostomi</taxon>
        <taxon>Mammalia</taxon>
        <taxon>Eutheria</taxon>
        <taxon>Euarchontoglires</taxon>
        <taxon>Glires</taxon>
        <taxon>Rodentia</taxon>
        <taxon>Myomorpha</taxon>
        <taxon>Muroidea</taxon>
        <taxon>Muridae</taxon>
        <taxon>Murinae</taxon>
        <taxon>Mus</taxon>
        <taxon>Mus</taxon>
    </lineage>
</organism>
<gene>
    <name type="primary">Lrig3</name>
    <name type="synonym">Kiaa3016</name>
</gene>
<evidence type="ECO:0000255" key="1"/>
<evidence type="ECO:0000255" key="2">
    <source>
        <dbReference type="PROSITE-ProRule" id="PRU00114"/>
    </source>
</evidence>
<evidence type="ECO:0000256" key="3">
    <source>
        <dbReference type="SAM" id="MobiDB-lite"/>
    </source>
</evidence>
<evidence type="ECO:0000269" key="4">
    <source>
    </source>
</evidence>
<evidence type="ECO:0000269" key="5">
    <source>
    </source>
</evidence>
<evidence type="ECO:0000269" key="6">
    <source>
    </source>
</evidence>
<evidence type="ECO:0000305" key="7"/>
<evidence type="ECO:0007829" key="8">
    <source>
        <dbReference type="PDB" id="3SO5"/>
    </source>
</evidence>
<proteinExistence type="evidence at protein level"/>
<feature type="signal peptide" evidence="1">
    <location>
        <begin position="1"/>
        <end position="24"/>
    </location>
</feature>
<feature type="chain" id="PRO_0000014832" description="Leucine-rich repeats and immunoglobulin-like domains protein 3">
    <location>
        <begin position="25"/>
        <end position="1117"/>
    </location>
</feature>
<feature type="transmembrane region" description="Helical" evidence="1">
    <location>
        <begin position="810"/>
        <end position="830"/>
    </location>
</feature>
<feature type="domain" description="LRRNT">
    <location>
        <begin position="38"/>
        <end position="74"/>
    </location>
</feature>
<feature type="repeat" description="LRR 1">
    <location>
        <begin position="75"/>
        <end position="98"/>
    </location>
</feature>
<feature type="repeat" description="LRR 2">
    <location>
        <begin position="99"/>
        <end position="120"/>
    </location>
</feature>
<feature type="repeat" description="LRR 3">
    <location>
        <begin position="122"/>
        <end position="143"/>
    </location>
</feature>
<feature type="repeat" description="LRR 4">
    <location>
        <begin position="146"/>
        <end position="168"/>
    </location>
</feature>
<feature type="repeat" description="LRR 5">
    <location>
        <begin position="169"/>
        <end position="189"/>
    </location>
</feature>
<feature type="repeat" description="LRR 6">
    <location>
        <begin position="193"/>
        <end position="214"/>
    </location>
</feature>
<feature type="repeat" description="LRR 7">
    <location>
        <begin position="216"/>
        <end position="237"/>
    </location>
</feature>
<feature type="repeat" description="LRR 8">
    <location>
        <begin position="240"/>
        <end position="261"/>
    </location>
</feature>
<feature type="repeat" description="LRR 9">
    <location>
        <begin position="264"/>
        <end position="285"/>
    </location>
</feature>
<feature type="repeat" description="LRR 10">
    <location>
        <begin position="288"/>
        <end position="309"/>
    </location>
</feature>
<feature type="repeat" description="LRR 11">
    <location>
        <begin position="312"/>
        <end position="333"/>
    </location>
</feature>
<feature type="repeat" description="LRR 12">
    <location>
        <begin position="336"/>
        <end position="357"/>
    </location>
</feature>
<feature type="repeat" description="LRR 13">
    <location>
        <begin position="360"/>
        <end position="382"/>
    </location>
</feature>
<feature type="repeat" description="LRR 14">
    <location>
        <begin position="387"/>
        <end position="408"/>
    </location>
</feature>
<feature type="repeat" description="LRR 15">
    <location>
        <begin position="411"/>
        <end position="432"/>
    </location>
</feature>
<feature type="domain" description="LRRCT">
    <location>
        <begin position="444"/>
        <end position="495"/>
    </location>
</feature>
<feature type="domain" description="Ig-like C2-type 1">
    <location>
        <begin position="499"/>
        <end position="598"/>
    </location>
</feature>
<feature type="domain" description="Ig-like C2-type 2">
    <location>
        <begin position="603"/>
        <end position="692"/>
    </location>
</feature>
<feature type="domain" description="Ig-like C2-type 3">
    <location>
        <begin position="697"/>
        <end position="783"/>
    </location>
</feature>
<feature type="region of interest" description="Disordered" evidence="3">
    <location>
        <begin position="1019"/>
        <end position="1093"/>
    </location>
</feature>
<feature type="compositionally biased region" description="Basic and acidic residues" evidence="3">
    <location>
        <begin position="1083"/>
        <end position="1093"/>
    </location>
</feature>
<feature type="glycosylation site" description="N-linked (GlcNAc...) asparagine" evidence="1">
    <location>
        <position position="156"/>
    </location>
</feature>
<feature type="glycosylation site" description="N-linked (GlcNAc...) asparagine" evidence="1">
    <location>
        <position position="274"/>
    </location>
</feature>
<feature type="glycosylation site" description="N-linked (GlcNAc...) asparagine" evidence="1">
    <location>
        <position position="442"/>
    </location>
</feature>
<feature type="glycosylation site" description="N-linked (GlcNAc...) asparagine" evidence="1">
    <location>
        <position position="469"/>
    </location>
</feature>
<feature type="glycosylation site" description="N-linked (GlcNAc...) asparagine" evidence="1">
    <location>
        <position position="688"/>
    </location>
</feature>
<feature type="glycosylation site" description="N-linked (GlcNAc...) asparagine" evidence="1">
    <location>
        <position position="729"/>
    </location>
</feature>
<feature type="glycosylation site" description="N-linked (GlcNAc...) asparagine" evidence="1">
    <location>
        <position position="1014"/>
    </location>
</feature>
<feature type="disulfide bond" evidence="2">
    <location>
        <begin position="520"/>
        <end position="581"/>
    </location>
</feature>
<feature type="disulfide bond" evidence="2">
    <location>
        <begin position="624"/>
        <end position="676"/>
    </location>
</feature>
<feature type="disulfide bond" evidence="2">
    <location>
        <begin position="718"/>
        <end position="767"/>
    </location>
</feature>
<feature type="sequence conflict" description="In Ref. 1; AAR98630." evidence="7" ref="1">
    <original>F</original>
    <variation>L</variation>
    <location>
        <position position="467"/>
    </location>
</feature>
<feature type="sequence conflict" description="In Ref. 4; BAC98291." evidence="7" ref="4">
    <location>
        <begin position="561"/>
        <end position="571"/>
    </location>
</feature>
<feature type="sequence conflict" description="In Ref. 4; BAC98291." evidence="7" ref="4">
    <original>S</original>
    <variation>F</variation>
    <location>
        <position position="1054"/>
    </location>
</feature>
<feature type="turn" evidence="8">
    <location>
        <begin position="491"/>
        <end position="494"/>
    </location>
</feature>
<feature type="strand" evidence="8">
    <location>
        <begin position="500"/>
        <end position="503"/>
    </location>
</feature>
<feature type="strand" evidence="8">
    <location>
        <begin position="508"/>
        <end position="511"/>
    </location>
</feature>
<feature type="strand" evidence="8">
    <location>
        <begin position="516"/>
        <end position="525"/>
    </location>
</feature>
<feature type="strand" evidence="8">
    <location>
        <begin position="531"/>
        <end position="535"/>
    </location>
</feature>
<feature type="strand" evidence="8">
    <location>
        <begin position="545"/>
        <end position="551"/>
    </location>
</feature>
<feature type="helix" evidence="8">
    <location>
        <begin position="554"/>
        <end position="556"/>
    </location>
</feature>
<feature type="strand" evidence="8">
    <location>
        <begin position="560"/>
        <end position="568"/>
    </location>
</feature>
<feature type="helix" evidence="8">
    <location>
        <begin position="573"/>
        <end position="575"/>
    </location>
</feature>
<feature type="strand" evidence="8">
    <location>
        <begin position="580"/>
        <end position="585"/>
    </location>
</feature>
<feature type="strand" evidence="8">
    <location>
        <begin position="588"/>
        <end position="591"/>
    </location>
</feature>
<feature type="strand" evidence="8">
    <location>
        <begin position="597"/>
        <end position="600"/>
    </location>
</feature>
<keyword id="KW-0002">3D-structure</keyword>
<keyword id="KW-1003">Cell membrane</keyword>
<keyword id="KW-0968">Cytoplasmic vesicle</keyword>
<keyword id="KW-0217">Developmental protein</keyword>
<keyword id="KW-1015">Disulfide bond</keyword>
<keyword id="KW-0325">Glycoprotein</keyword>
<keyword id="KW-0393">Immunoglobulin domain</keyword>
<keyword id="KW-0433">Leucine-rich repeat</keyword>
<keyword id="KW-0472">Membrane</keyword>
<keyword id="KW-1185">Reference proteome</keyword>
<keyword id="KW-0677">Repeat</keyword>
<keyword id="KW-0732">Signal</keyword>
<keyword id="KW-0812">Transmembrane</keyword>
<keyword id="KW-1133">Transmembrane helix</keyword>
<comment type="function">
    <text evidence="5 6">Plays a role in craniofacial and inner ear morphogenesis during embryonic development. Acts within the otic vesicle epithelium to control formation of the lateral semicircular canal in the inner ear, possibly by restricting the expression of NTN1.</text>
</comment>
<comment type="subunit">
    <text evidence="6">Interacts with EGFR, ERBB2 and ERBB4 (in vitro).</text>
</comment>
<comment type="subcellular location">
    <subcellularLocation>
        <location evidence="6">Cell membrane</location>
        <topology evidence="6">Single-pass type I membrane protein</topology>
    </subcellularLocation>
    <subcellularLocation>
        <location evidence="6">Cytoplasmic vesicle membrane</location>
        <topology evidence="6">Single-pass type I membrane protein</topology>
    </subcellularLocation>
    <text>Detected in cytoplasmic vesicles when coexpressed with ERBB4.</text>
</comment>
<comment type="tissue specificity">
    <text evidence="4">Widely expressed.</text>
</comment>
<comment type="developmental stage">
    <text evidence="5">Detected in the lateral wall of the otic vesicle at 10.5 dpc. Enriched in lateral pouch epithelium at 12.5 dpc.</text>
</comment>
<comment type="disruption phenotype">
    <text evidence="5 6">Mice display circling and head tossing behavior, due to a defect in inner ear morphogenesis. In mutants, fusion of the canal pouches starts earlier than normal and involves an abnormally large region, leading to truncation of the lateral semicircular canal in the inner ear. Nevertheless, hearing seems to be normal. Mutant mice also display craniofacial deformities, and especially a dramatically shortened snout.</text>
</comment>
<comment type="sequence caution" evidence="7">
    <conflict type="erroneous initiation">
        <sequence resource="EMBL-CDS" id="BAC32175"/>
    </conflict>
    <text>Truncated N-terminus.</text>
</comment>
<comment type="sequence caution" evidence="7">
    <conflict type="frameshift">
        <sequence resource="EMBL-CDS" id="BAC98291"/>
    </conflict>
</comment>
<dbReference type="EMBL" id="AY505341">
    <property type="protein sequence ID" value="AAR98630.1"/>
    <property type="molecule type" value="mRNA"/>
</dbReference>
<dbReference type="EMBL" id="BC065142">
    <property type="protein sequence ID" value="AAH65142.1"/>
    <property type="molecule type" value="mRNA"/>
</dbReference>
<dbReference type="EMBL" id="AK044994">
    <property type="protein sequence ID" value="BAC32175.1"/>
    <property type="status" value="ALT_INIT"/>
    <property type="molecule type" value="mRNA"/>
</dbReference>
<dbReference type="EMBL" id="AK078783">
    <property type="protein sequence ID" value="BAC37394.1"/>
    <property type="molecule type" value="mRNA"/>
</dbReference>
<dbReference type="EMBL" id="AK129481">
    <property type="protein sequence ID" value="BAC98291.1"/>
    <property type="status" value="ALT_FRAME"/>
    <property type="molecule type" value="mRNA"/>
</dbReference>
<dbReference type="CCDS" id="CCDS24219.1"/>
<dbReference type="RefSeq" id="NP_796126.4">
    <property type="nucleotide sequence ID" value="NM_177152.5"/>
</dbReference>
<dbReference type="PDB" id="3SO5">
    <property type="method" value="X-ray"/>
    <property type="resolution" value="1.70 A"/>
    <property type="chains" value="A/B=490-600"/>
</dbReference>
<dbReference type="PDBsum" id="3SO5"/>
<dbReference type="SMR" id="Q6P1C6"/>
<dbReference type="FunCoup" id="Q6P1C6">
    <property type="interactions" value="577"/>
</dbReference>
<dbReference type="STRING" id="10090.ENSMUSP00000074360"/>
<dbReference type="GlyCosmos" id="Q6P1C6">
    <property type="glycosylation" value="7 sites, No reported glycans"/>
</dbReference>
<dbReference type="GlyGen" id="Q6P1C6">
    <property type="glycosylation" value="7 sites, 1 N-linked glycan (1 site)"/>
</dbReference>
<dbReference type="iPTMnet" id="Q6P1C6"/>
<dbReference type="PhosphoSitePlus" id="Q6P1C6"/>
<dbReference type="jPOST" id="Q6P1C6"/>
<dbReference type="PaxDb" id="10090-ENSMUSP00000074360"/>
<dbReference type="ProteomicsDB" id="252675"/>
<dbReference type="Antibodypedia" id="2484">
    <property type="antibodies" value="143 antibodies from 25 providers"/>
</dbReference>
<dbReference type="DNASU" id="320398"/>
<dbReference type="Ensembl" id="ENSMUST00000074807.8">
    <property type="protein sequence ID" value="ENSMUSP00000074360.7"/>
    <property type="gene ID" value="ENSMUSG00000020105.10"/>
</dbReference>
<dbReference type="GeneID" id="320398"/>
<dbReference type="KEGG" id="mmu:320398"/>
<dbReference type="UCSC" id="uc007hhc.2">
    <property type="organism name" value="mouse"/>
</dbReference>
<dbReference type="AGR" id="MGI:2443955"/>
<dbReference type="CTD" id="121227"/>
<dbReference type="MGI" id="MGI:2443955">
    <property type="gene designation" value="Lrig3"/>
</dbReference>
<dbReference type="VEuPathDB" id="HostDB:ENSMUSG00000020105"/>
<dbReference type="eggNOG" id="KOG0619">
    <property type="taxonomic scope" value="Eukaryota"/>
</dbReference>
<dbReference type="eggNOG" id="KOG4194">
    <property type="taxonomic scope" value="Eukaryota"/>
</dbReference>
<dbReference type="GeneTree" id="ENSGT00940000157098"/>
<dbReference type="HOGENOM" id="CLU_000288_18_24_1"/>
<dbReference type="InParanoid" id="Q6P1C6"/>
<dbReference type="OMA" id="WIIEDQS"/>
<dbReference type="OrthoDB" id="5917255at2759"/>
<dbReference type="PhylomeDB" id="Q6P1C6"/>
<dbReference type="TreeFam" id="TF325380"/>
<dbReference type="BioGRID-ORCS" id="320398">
    <property type="hits" value="2 hits in 79 CRISPR screens"/>
</dbReference>
<dbReference type="ChiTaRS" id="Lrig3">
    <property type="organism name" value="mouse"/>
</dbReference>
<dbReference type="EvolutionaryTrace" id="Q6P1C6"/>
<dbReference type="PRO" id="PR:Q6P1C6"/>
<dbReference type="Proteomes" id="UP000000589">
    <property type="component" value="Chromosome 10"/>
</dbReference>
<dbReference type="RNAct" id="Q6P1C6">
    <property type="molecule type" value="protein"/>
</dbReference>
<dbReference type="Bgee" id="ENSMUSG00000020105">
    <property type="expression patterns" value="Expressed in manus and 202 other cell types or tissues"/>
</dbReference>
<dbReference type="GO" id="GO:0030659">
    <property type="term" value="C:cytoplasmic vesicle membrane"/>
    <property type="evidence" value="ECO:0007669"/>
    <property type="project" value="UniProtKB-SubCell"/>
</dbReference>
<dbReference type="GO" id="GO:0005886">
    <property type="term" value="C:plasma membrane"/>
    <property type="evidence" value="ECO:0007669"/>
    <property type="project" value="UniProtKB-SubCell"/>
</dbReference>
<dbReference type="GO" id="GO:0032474">
    <property type="term" value="P:otolith morphogenesis"/>
    <property type="evidence" value="ECO:0000316"/>
    <property type="project" value="MGI"/>
</dbReference>
<dbReference type="CDD" id="cd05763">
    <property type="entry name" value="IgI_LRIG1-like"/>
    <property type="match status" value="1"/>
</dbReference>
<dbReference type="FunFam" id="2.60.40.10:FF:000161">
    <property type="entry name" value="Leucine rich repeats and immunoglobulin like domains 2"/>
    <property type="match status" value="1"/>
</dbReference>
<dbReference type="FunFam" id="3.80.10.10:FF:000040">
    <property type="entry name" value="Leucine rich repeats and immunoglobulin like domains 2"/>
    <property type="match status" value="1"/>
</dbReference>
<dbReference type="FunFam" id="2.60.40.10:FF:000150">
    <property type="entry name" value="Leucine rich repeats and immunoglobulin like domains 3"/>
    <property type="match status" value="1"/>
</dbReference>
<dbReference type="FunFam" id="2.60.40.10:FF:000224">
    <property type="entry name" value="Leucine rich repeats and immunoglobulin like domains 3"/>
    <property type="match status" value="1"/>
</dbReference>
<dbReference type="FunFam" id="3.80.10.10:FF:000023">
    <property type="entry name" value="Leucine rich repeats and immunoglobulin like domains 3"/>
    <property type="match status" value="1"/>
</dbReference>
<dbReference type="Gene3D" id="2.60.40.10">
    <property type="entry name" value="Immunoglobulins"/>
    <property type="match status" value="3"/>
</dbReference>
<dbReference type="Gene3D" id="3.80.10.10">
    <property type="entry name" value="Ribonuclease Inhibitor"/>
    <property type="match status" value="2"/>
</dbReference>
<dbReference type="InterPro" id="IPR000483">
    <property type="entry name" value="Cys-rich_flank_reg_C"/>
</dbReference>
<dbReference type="InterPro" id="IPR007110">
    <property type="entry name" value="Ig-like_dom"/>
</dbReference>
<dbReference type="InterPro" id="IPR036179">
    <property type="entry name" value="Ig-like_dom_sf"/>
</dbReference>
<dbReference type="InterPro" id="IPR013783">
    <property type="entry name" value="Ig-like_fold"/>
</dbReference>
<dbReference type="InterPro" id="IPR013098">
    <property type="entry name" value="Ig_I-set"/>
</dbReference>
<dbReference type="InterPro" id="IPR003599">
    <property type="entry name" value="Ig_sub"/>
</dbReference>
<dbReference type="InterPro" id="IPR003598">
    <property type="entry name" value="Ig_sub2"/>
</dbReference>
<dbReference type="InterPro" id="IPR001611">
    <property type="entry name" value="Leu-rich_rpt"/>
</dbReference>
<dbReference type="InterPro" id="IPR003591">
    <property type="entry name" value="Leu-rich_rpt_typical-subtyp"/>
</dbReference>
<dbReference type="InterPro" id="IPR050467">
    <property type="entry name" value="LRFN"/>
</dbReference>
<dbReference type="InterPro" id="IPR032675">
    <property type="entry name" value="LRR_dom_sf"/>
</dbReference>
<dbReference type="PANTHER" id="PTHR45842:SF12">
    <property type="entry name" value="KEKKON 5, ISOFORM A"/>
    <property type="match status" value="1"/>
</dbReference>
<dbReference type="PANTHER" id="PTHR45842">
    <property type="entry name" value="SYNAPTIC ADHESION-LIKE MOLECULE SALM"/>
    <property type="match status" value="1"/>
</dbReference>
<dbReference type="Pfam" id="PF07679">
    <property type="entry name" value="I-set"/>
    <property type="match status" value="2"/>
</dbReference>
<dbReference type="Pfam" id="PF13927">
    <property type="entry name" value="Ig_3"/>
    <property type="match status" value="1"/>
</dbReference>
<dbReference type="Pfam" id="PF00560">
    <property type="entry name" value="LRR_1"/>
    <property type="match status" value="1"/>
</dbReference>
<dbReference type="Pfam" id="PF13855">
    <property type="entry name" value="LRR_8"/>
    <property type="match status" value="4"/>
</dbReference>
<dbReference type="PRINTS" id="PR00019">
    <property type="entry name" value="LEURICHRPT"/>
</dbReference>
<dbReference type="SMART" id="SM00409">
    <property type="entry name" value="IG"/>
    <property type="match status" value="3"/>
</dbReference>
<dbReference type="SMART" id="SM00408">
    <property type="entry name" value="IGc2"/>
    <property type="match status" value="3"/>
</dbReference>
<dbReference type="SMART" id="SM00365">
    <property type="entry name" value="LRR_SD22"/>
    <property type="match status" value="7"/>
</dbReference>
<dbReference type="SMART" id="SM00369">
    <property type="entry name" value="LRR_TYP"/>
    <property type="match status" value="14"/>
</dbReference>
<dbReference type="SMART" id="SM00082">
    <property type="entry name" value="LRRCT"/>
    <property type="match status" value="1"/>
</dbReference>
<dbReference type="SUPFAM" id="SSF48726">
    <property type="entry name" value="Immunoglobulin"/>
    <property type="match status" value="3"/>
</dbReference>
<dbReference type="SUPFAM" id="SSF52058">
    <property type="entry name" value="L domain-like"/>
    <property type="match status" value="2"/>
</dbReference>
<dbReference type="PROSITE" id="PS50835">
    <property type="entry name" value="IG_LIKE"/>
    <property type="match status" value="3"/>
</dbReference>
<dbReference type="PROSITE" id="PS51450">
    <property type="entry name" value="LRR"/>
    <property type="match status" value="15"/>
</dbReference>
<protein>
    <recommendedName>
        <fullName>Leucine-rich repeats and immunoglobulin-like domains protein 3</fullName>
        <shortName>LIG-3</shortName>
    </recommendedName>
</protein>
<reference key="1">
    <citation type="journal article" date="2004" name="Genomics">
        <title>The LRIG gene family has three vertebrate paralogs widely expressed in human and mouse tissues and a homolog in Ascidiacea.</title>
        <authorList>
            <person name="Guo D."/>
            <person name="Holmlund C."/>
            <person name="Henriksson R."/>
            <person name="Hedman H."/>
        </authorList>
    </citation>
    <scope>NUCLEOTIDE SEQUENCE [MRNA]</scope>
    <scope>TISSUE SPECIFICITY</scope>
</reference>
<reference key="2">
    <citation type="journal article" date="2004" name="Genome Res.">
        <title>The status, quality, and expansion of the NIH full-length cDNA project: the Mammalian Gene Collection (MGC).</title>
        <authorList>
            <consortium name="The MGC Project Team"/>
        </authorList>
    </citation>
    <scope>NUCLEOTIDE SEQUENCE [LARGE SCALE MRNA]</scope>
    <source>
        <strain>C57BL/6J</strain>
        <tissue>Eye</tissue>
    </source>
</reference>
<reference key="3">
    <citation type="journal article" date="2005" name="Science">
        <title>The transcriptional landscape of the mammalian genome.</title>
        <authorList>
            <person name="Carninci P."/>
            <person name="Kasukawa T."/>
            <person name="Katayama S."/>
            <person name="Gough J."/>
            <person name="Frith M.C."/>
            <person name="Maeda N."/>
            <person name="Oyama R."/>
            <person name="Ravasi T."/>
            <person name="Lenhard B."/>
            <person name="Wells C."/>
            <person name="Kodzius R."/>
            <person name="Shimokawa K."/>
            <person name="Bajic V.B."/>
            <person name="Brenner S.E."/>
            <person name="Batalov S."/>
            <person name="Forrest A.R."/>
            <person name="Zavolan M."/>
            <person name="Davis M.J."/>
            <person name="Wilming L.G."/>
            <person name="Aidinis V."/>
            <person name="Allen J.E."/>
            <person name="Ambesi-Impiombato A."/>
            <person name="Apweiler R."/>
            <person name="Aturaliya R.N."/>
            <person name="Bailey T.L."/>
            <person name="Bansal M."/>
            <person name="Baxter L."/>
            <person name="Beisel K.W."/>
            <person name="Bersano T."/>
            <person name="Bono H."/>
            <person name="Chalk A.M."/>
            <person name="Chiu K.P."/>
            <person name="Choudhary V."/>
            <person name="Christoffels A."/>
            <person name="Clutterbuck D.R."/>
            <person name="Crowe M.L."/>
            <person name="Dalla E."/>
            <person name="Dalrymple B.P."/>
            <person name="de Bono B."/>
            <person name="Della Gatta G."/>
            <person name="di Bernardo D."/>
            <person name="Down T."/>
            <person name="Engstrom P."/>
            <person name="Fagiolini M."/>
            <person name="Faulkner G."/>
            <person name="Fletcher C.F."/>
            <person name="Fukushima T."/>
            <person name="Furuno M."/>
            <person name="Futaki S."/>
            <person name="Gariboldi M."/>
            <person name="Georgii-Hemming P."/>
            <person name="Gingeras T.R."/>
            <person name="Gojobori T."/>
            <person name="Green R.E."/>
            <person name="Gustincich S."/>
            <person name="Harbers M."/>
            <person name="Hayashi Y."/>
            <person name="Hensch T.K."/>
            <person name="Hirokawa N."/>
            <person name="Hill D."/>
            <person name="Huminiecki L."/>
            <person name="Iacono M."/>
            <person name="Ikeo K."/>
            <person name="Iwama A."/>
            <person name="Ishikawa T."/>
            <person name="Jakt M."/>
            <person name="Kanapin A."/>
            <person name="Katoh M."/>
            <person name="Kawasawa Y."/>
            <person name="Kelso J."/>
            <person name="Kitamura H."/>
            <person name="Kitano H."/>
            <person name="Kollias G."/>
            <person name="Krishnan S.P."/>
            <person name="Kruger A."/>
            <person name="Kummerfeld S.K."/>
            <person name="Kurochkin I.V."/>
            <person name="Lareau L.F."/>
            <person name="Lazarevic D."/>
            <person name="Lipovich L."/>
            <person name="Liu J."/>
            <person name="Liuni S."/>
            <person name="McWilliam S."/>
            <person name="Madan Babu M."/>
            <person name="Madera M."/>
            <person name="Marchionni L."/>
            <person name="Matsuda H."/>
            <person name="Matsuzawa S."/>
            <person name="Miki H."/>
            <person name="Mignone F."/>
            <person name="Miyake S."/>
            <person name="Morris K."/>
            <person name="Mottagui-Tabar S."/>
            <person name="Mulder N."/>
            <person name="Nakano N."/>
            <person name="Nakauchi H."/>
            <person name="Ng P."/>
            <person name="Nilsson R."/>
            <person name="Nishiguchi S."/>
            <person name="Nishikawa S."/>
            <person name="Nori F."/>
            <person name="Ohara O."/>
            <person name="Okazaki Y."/>
            <person name="Orlando V."/>
            <person name="Pang K.C."/>
            <person name="Pavan W.J."/>
            <person name="Pavesi G."/>
            <person name="Pesole G."/>
            <person name="Petrovsky N."/>
            <person name="Piazza S."/>
            <person name="Reed J."/>
            <person name="Reid J.F."/>
            <person name="Ring B.Z."/>
            <person name="Ringwald M."/>
            <person name="Rost B."/>
            <person name="Ruan Y."/>
            <person name="Salzberg S.L."/>
            <person name="Sandelin A."/>
            <person name="Schneider C."/>
            <person name="Schoenbach C."/>
            <person name="Sekiguchi K."/>
            <person name="Semple C.A."/>
            <person name="Seno S."/>
            <person name="Sessa L."/>
            <person name="Sheng Y."/>
            <person name="Shibata Y."/>
            <person name="Shimada H."/>
            <person name="Shimada K."/>
            <person name="Silva D."/>
            <person name="Sinclair B."/>
            <person name="Sperling S."/>
            <person name="Stupka E."/>
            <person name="Sugiura K."/>
            <person name="Sultana R."/>
            <person name="Takenaka Y."/>
            <person name="Taki K."/>
            <person name="Tammoja K."/>
            <person name="Tan S.L."/>
            <person name="Tang S."/>
            <person name="Taylor M.S."/>
            <person name="Tegner J."/>
            <person name="Teichmann S.A."/>
            <person name="Ueda H.R."/>
            <person name="van Nimwegen E."/>
            <person name="Verardo R."/>
            <person name="Wei C.L."/>
            <person name="Yagi K."/>
            <person name="Yamanishi H."/>
            <person name="Zabarovsky E."/>
            <person name="Zhu S."/>
            <person name="Zimmer A."/>
            <person name="Hide W."/>
            <person name="Bult C."/>
            <person name="Grimmond S.M."/>
            <person name="Teasdale R.D."/>
            <person name="Liu E.T."/>
            <person name="Brusic V."/>
            <person name="Quackenbush J."/>
            <person name="Wahlestedt C."/>
            <person name="Mattick J.S."/>
            <person name="Hume D.A."/>
            <person name="Kai C."/>
            <person name="Sasaki D."/>
            <person name="Tomaru Y."/>
            <person name="Fukuda S."/>
            <person name="Kanamori-Katayama M."/>
            <person name="Suzuki M."/>
            <person name="Aoki J."/>
            <person name="Arakawa T."/>
            <person name="Iida J."/>
            <person name="Imamura K."/>
            <person name="Itoh M."/>
            <person name="Kato T."/>
            <person name="Kawaji H."/>
            <person name="Kawagashira N."/>
            <person name="Kawashima T."/>
            <person name="Kojima M."/>
            <person name="Kondo S."/>
            <person name="Konno H."/>
            <person name="Nakano K."/>
            <person name="Ninomiya N."/>
            <person name="Nishio T."/>
            <person name="Okada M."/>
            <person name="Plessy C."/>
            <person name="Shibata K."/>
            <person name="Shiraki T."/>
            <person name="Suzuki S."/>
            <person name="Tagami M."/>
            <person name="Waki K."/>
            <person name="Watahiki A."/>
            <person name="Okamura-Oho Y."/>
            <person name="Suzuki H."/>
            <person name="Kawai J."/>
            <person name="Hayashizaki Y."/>
        </authorList>
    </citation>
    <scope>NUCLEOTIDE SEQUENCE [LARGE SCALE MRNA] OF 1-79 AND 718-1117</scope>
    <source>
        <strain>C57BL/6J</strain>
        <tissue>Embryo</tissue>
        <tissue>Embryonic testis</tissue>
    </source>
</reference>
<reference key="4">
    <citation type="journal article" date="2003" name="DNA Res.">
        <title>Prediction of the coding sequences of mouse homologues of KIAA gene: II. The complete nucleotide sequences of 400 mouse KIAA-homologous cDNAs identified by screening of terminal sequences of cDNA clones randomly sampled from size-fractionated libraries.</title>
        <authorList>
            <person name="Okazaki N."/>
            <person name="Kikuno R."/>
            <person name="Ohara R."/>
            <person name="Inamoto S."/>
            <person name="Aizawa H."/>
            <person name="Yuasa S."/>
            <person name="Nakajima D."/>
            <person name="Nagase T."/>
            <person name="Ohara O."/>
            <person name="Koga H."/>
        </authorList>
    </citation>
    <scope>NUCLEOTIDE SEQUENCE [LARGE SCALE MRNA] OF 254-1117</scope>
</reference>
<reference key="5">
    <citation type="journal article" date="2008" name="Development">
        <title>Cross-repressive interactions between Lrig3 and netrin 1 shape the architecture of the inner ear.</title>
        <authorList>
            <person name="Abraira V.E."/>
            <person name="Del Rio T."/>
            <person name="Tucker A.F."/>
            <person name="Slonimsky J."/>
            <person name="Keirnes H.L."/>
            <person name="Goodrich L.V."/>
        </authorList>
    </citation>
    <scope>DISRUPTION PHENOTYPE</scope>
    <scope>FUNCTION</scope>
    <scope>DEVELOPMENTAL STAGE</scope>
</reference>
<reference key="6">
    <citation type="journal article" date="2010" name="PLoS ONE">
        <title>Vertebrate Lrig3-ErbB interactions occur in vitro but are unlikely to play a role in Lrig3-dependent inner ear morphogenesis.</title>
        <authorList>
            <person name="Abraira V.E."/>
            <person name="Satoh T."/>
            <person name="Fekete D.M."/>
            <person name="Goodrich L.V."/>
        </authorList>
    </citation>
    <scope>DISRUPTION PHENOTYPE</scope>
    <scope>FUNCTION</scope>
    <scope>SUBCELLULAR LOCATION</scope>
    <scope>INTERACTION WITH EGFR; ERBB2 AND ERBB4</scope>
</reference>
<reference key="7">
    <citation type="submission" date="2011-07" db="PDB data bank">
        <title>Crystal structure of an immunoglobulin I-set domain of LRIG3 protein (LRIG3) from Mus musculus at 1.70 A resolution.</title>
        <authorList>
            <consortium name="Joint center for structural genomics (JCSG)"/>
        </authorList>
    </citation>
    <scope>X-RAY CRYSTALLOGRAPHY (1.7 ANGSTROMS) OF 490-600</scope>
</reference>
<accession>Q6P1C6</accession>
<accession>Q6ZPE6</accession>
<accession>Q8BRF0</accession>
<accession>Q8BS51</accession>
<accession>Q8C5E4</accession>